<proteinExistence type="inferred from homology"/>
<keyword id="KW-0687">Ribonucleoprotein</keyword>
<keyword id="KW-0689">Ribosomal protein</keyword>
<sequence>MTQVVVGQNEAIESALRRFKRQVAKAGIYADIKKHQFFETPQEKRKRKAVARRRQRTRRR</sequence>
<organism>
    <name type="scientific">Microcystis aeruginosa (strain NIES-843 / IAM M-2473)</name>
    <dbReference type="NCBI Taxonomy" id="449447"/>
    <lineage>
        <taxon>Bacteria</taxon>
        <taxon>Bacillati</taxon>
        <taxon>Cyanobacteriota</taxon>
        <taxon>Cyanophyceae</taxon>
        <taxon>Oscillatoriophycideae</taxon>
        <taxon>Chroococcales</taxon>
        <taxon>Microcystaceae</taxon>
        <taxon>Microcystis</taxon>
    </lineage>
</organism>
<accession>B0JIQ1</accession>
<evidence type="ECO:0000255" key="1">
    <source>
        <dbReference type="HAMAP-Rule" id="MF_00358"/>
    </source>
</evidence>
<evidence type="ECO:0000256" key="2">
    <source>
        <dbReference type="SAM" id="MobiDB-lite"/>
    </source>
</evidence>
<evidence type="ECO:0000305" key="3"/>
<name>RS21_MICAN</name>
<reference key="1">
    <citation type="journal article" date="2007" name="DNA Res.">
        <title>Complete genomic structure of the bloom-forming toxic cyanobacterium Microcystis aeruginosa NIES-843.</title>
        <authorList>
            <person name="Kaneko T."/>
            <person name="Nakajima N."/>
            <person name="Okamoto S."/>
            <person name="Suzuki I."/>
            <person name="Tanabe Y."/>
            <person name="Tamaoki M."/>
            <person name="Nakamura Y."/>
            <person name="Kasai F."/>
            <person name="Watanabe A."/>
            <person name="Kawashima K."/>
            <person name="Kishida Y."/>
            <person name="Ono A."/>
            <person name="Shimizu Y."/>
            <person name="Takahashi C."/>
            <person name="Minami C."/>
            <person name="Fujishiro T."/>
            <person name="Kohara M."/>
            <person name="Katoh M."/>
            <person name="Nakazaki N."/>
            <person name="Nakayama S."/>
            <person name="Yamada M."/>
            <person name="Tabata S."/>
            <person name="Watanabe M.M."/>
        </authorList>
    </citation>
    <scope>NUCLEOTIDE SEQUENCE [LARGE SCALE GENOMIC DNA]</scope>
    <source>
        <strain>NIES-843 / IAM M-247</strain>
    </source>
</reference>
<dbReference type="EMBL" id="AP009552">
    <property type="protein sequence ID" value="BAG02549.1"/>
    <property type="molecule type" value="Genomic_DNA"/>
</dbReference>
<dbReference type="RefSeq" id="WP_002738938.1">
    <property type="nucleotide sequence ID" value="NC_010296.1"/>
</dbReference>
<dbReference type="SMR" id="B0JIQ1"/>
<dbReference type="STRING" id="449447.MAE_27270"/>
<dbReference type="PaxDb" id="449447-MAE_27270"/>
<dbReference type="EnsemblBacteria" id="BAG02549">
    <property type="protein sequence ID" value="BAG02549"/>
    <property type="gene ID" value="MAE_27270"/>
</dbReference>
<dbReference type="GeneID" id="66708837"/>
<dbReference type="KEGG" id="mar:MAE_27270"/>
<dbReference type="eggNOG" id="COG0828">
    <property type="taxonomic scope" value="Bacteria"/>
</dbReference>
<dbReference type="HOGENOM" id="CLU_159258_3_1_3"/>
<dbReference type="BioCyc" id="MAER449447:MAE_RS11905-MONOMER"/>
<dbReference type="Proteomes" id="UP000001510">
    <property type="component" value="Chromosome"/>
</dbReference>
<dbReference type="GO" id="GO:1990904">
    <property type="term" value="C:ribonucleoprotein complex"/>
    <property type="evidence" value="ECO:0007669"/>
    <property type="project" value="UniProtKB-KW"/>
</dbReference>
<dbReference type="GO" id="GO:0005840">
    <property type="term" value="C:ribosome"/>
    <property type="evidence" value="ECO:0007669"/>
    <property type="project" value="UniProtKB-KW"/>
</dbReference>
<dbReference type="GO" id="GO:0003735">
    <property type="term" value="F:structural constituent of ribosome"/>
    <property type="evidence" value="ECO:0007669"/>
    <property type="project" value="InterPro"/>
</dbReference>
<dbReference type="GO" id="GO:0006412">
    <property type="term" value="P:translation"/>
    <property type="evidence" value="ECO:0007669"/>
    <property type="project" value="UniProtKB-UniRule"/>
</dbReference>
<dbReference type="Gene3D" id="1.20.5.1150">
    <property type="entry name" value="Ribosomal protein S8"/>
    <property type="match status" value="1"/>
</dbReference>
<dbReference type="HAMAP" id="MF_00358">
    <property type="entry name" value="Ribosomal_bS21"/>
    <property type="match status" value="1"/>
</dbReference>
<dbReference type="InterPro" id="IPR001911">
    <property type="entry name" value="Ribosomal_bS21"/>
</dbReference>
<dbReference type="InterPro" id="IPR018278">
    <property type="entry name" value="Ribosomal_bS21_CS"/>
</dbReference>
<dbReference type="InterPro" id="IPR038380">
    <property type="entry name" value="Ribosomal_bS21_sf"/>
</dbReference>
<dbReference type="NCBIfam" id="TIGR00030">
    <property type="entry name" value="S21p"/>
    <property type="match status" value="1"/>
</dbReference>
<dbReference type="PANTHER" id="PTHR21109">
    <property type="entry name" value="MITOCHONDRIAL 28S RIBOSOMAL PROTEIN S21"/>
    <property type="match status" value="1"/>
</dbReference>
<dbReference type="PANTHER" id="PTHR21109:SF0">
    <property type="entry name" value="SMALL RIBOSOMAL SUBUNIT PROTEIN BS21M"/>
    <property type="match status" value="1"/>
</dbReference>
<dbReference type="Pfam" id="PF01165">
    <property type="entry name" value="Ribosomal_S21"/>
    <property type="match status" value="1"/>
</dbReference>
<dbReference type="PRINTS" id="PR00976">
    <property type="entry name" value="RIBOSOMALS21"/>
</dbReference>
<dbReference type="PROSITE" id="PS01181">
    <property type="entry name" value="RIBOSOMAL_S21"/>
    <property type="match status" value="1"/>
</dbReference>
<comment type="similarity">
    <text evidence="1">Belongs to the bacterial ribosomal protein bS21 family.</text>
</comment>
<protein>
    <recommendedName>
        <fullName evidence="1">Small ribosomal subunit protein bS21</fullName>
    </recommendedName>
    <alternativeName>
        <fullName evidence="3">30S ribosomal protein S21</fullName>
    </alternativeName>
</protein>
<feature type="chain" id="PRO_1000079412" description="Small ribosomal subunit protein bS21">
    <location>
        <begin position="1"/>
        <end position="60"/>
    </location>
</feature>
<feature type="region of interest" description="Disordered" evidence="2">
    <location>
        <begin position="39"/>
        <end position="60"/>
    </location>
</feature>
<feature type="compositionally biased region" description="Basic residues" evidence="2">
    <location>
        <begin position="44"/>
        <end position="60"/>
    </location>
</feature>
<gene>
    <name evidence="1" type="primary">rpsU</name>
    <name evidence="1" type="synonym">rps21</name>
    <name type="ordered locus">MAE_27270</name>
</gene>